<name>YRAK_BACSU</name>
<protein>
    <recommendedName>
        <fullName>Uncharacterized hydrolase YraK</fullName>
        <ecNumber>3.-.-.-</ecNumber>
    </recommendedName>
</protein>
<keyword id="KW-0378">Hydrolase</keyword>
<keyword id="KW-1185">Reference proteome</keyword>
<evidence type="ECO:0000255" key="1"/>
<evidence type="ECO:0000305" key="2"/>
<accession>O07937</accession>
<accession>C0SP87</accession>
<accession>Q795Z8</accession>
<organism>
    <name type="scientific">Bacillus subtilis (strain 168)</name>
    <dbReference type="NCBI Taxonomy" id="224308"/>
    <lineage>
        <taxon>Bacteria</taxon>
        <taxon>Bacillati</taxon>
        <taxon>Bacillota</taxon>
        <taxon>Bacilli</taxon>
        <taxon>Bacillales</taxon>
        <taxon>Bacillaceae</taxon>
        <taxon>Bacillus</taxon>
    </lineage>
</organism>
<comment type="similarity">
    <text evidence="2">Belongs to the AB hydrolase superfamily.</text>
</comment>
<feature type="chain" id="PRO_0000382900" description="Uncharacterized hydrolase YraK">
    <location>
        <begin position="1"/>
        <end position="271"/>
    </location>
</feature>
<feature type="domain" description="AB hydrolase-1" evidence="1">
    <location>
        <begin position="24"/>
        <end position="124"/>
    </location>
</feature>
<proteinExistence type="inferred from homology"/>
<dbReference type="EC" id="3.-.-.-"/>
<dbReference type="EMBL" id="U93875">
    <property type="protein sequence ID" value="AAB80880.1"/>
    <property type="status" value="ALT_TERM"/>
    <property type="molecule type" value="Genomic_DNA"/>
</dbReference>
<dbReference type="EMBL" id="X92868">
    <property type="protein sequence ID" value="CAA63453.1"/>
    <property type="status" value="ALT_TERM"/>
    <property type="molecule type" value="Genomic_DNA"/>
</dbReference>
<dbReference type="EMBL" id="AL009126">
    <property type="protein sequence ID" value="CAB14632.2"/>
    <property type="molecule type" value="Genomic_DNA"/>
</dbReference>
<dbReference type="PIR" id="C69971">
    <property type="entry name" value="C69971"/>
</dbReference>
<dbReference type="RefSeq" id="NP_390568.2">
    <property type="nucleotide sequence ID" value="NC_000964.3"/>
</dbReference>
<dbReference type="RefSeq" id="WP_003229849.1">
    <property type="nucleotide sequence ID" value="NZ_OZ025638.1"/>
</dbReference>
<dbReference type="SMR" id="O07937"/>
<dbReference type="FunCoup" id="O07937">
    <property type="interactions" value="3"/>
</dbReference>
<dbReference type="STRING" id="224308.BSU26910"/>
<dbReference type="ESTHER" id="bacsu-YRAK">
    <property type="family name" value="AlphaBeta_hydrolase"/>
</dbReference>
<dbReference type="PaxDb" id="224308-BSU26910"/>
<dbReference type="EnsemblBacteria" id="CAB14632">
    <property type="protein sequence ID" value="CAB14632"/>
    <property type="gene ID" value="BSU_26910"/>
</dbReference>
<dbReference type="GeneID" id="936746"/>
<dbReference type="KEGG" id="bsu:BSU26910"/>
<dbReference type="PATRIC" id="fig|224308.179.peg.2923"/>
<dbReference type="eggNOG" id="COG0596">
    <property type="taxonomic scope" value="Bacteria"/>
</dbReference>
<dbReference type="InParanoid" id="O07937"/>
<dbReference type="OrthoDB" id="9805423at2"/>
<dbReference type="PhylomeDB" id="O07937"/>
<dbReference type="BioCyc" id="BSUB:BSU26910-MONOMER"/>
<dbReference type="Proteomes" id="UP000001570">
    <property type="component" value="Chromosome"/>
</dbReference>
<dbReference type="GO" id="GO:0004806">
    <property type="term" value="F:triacylglycerol lipase activity"/>
    <property type="evidence" value="ECO:0000318"/>
    <property type="project" value="GO_Central"/>
</dbReference>
<dbReference type="GO" id="GO:0046503">
    <property type="term" value="P:glycerolipid catabolic process"/>
    <property type="evidence" value="ECO:0000318"/>
    <property type="project" value="GO_Central"/>
</dbReference>
<dbReference type="Gene3D" id="3.40.50.1820">
    <property type="entry name" value="alpha/beta hydrolase"/>
    <property type="match status" value="1"/>
</dbReference>
<dbReference type="InterPro" id="IPR050471">
    <property type="entry name" value="AB_hydrolase"/>
</dbReference>
<dbReference type="InterPro" id="IPR000073">
    <property type="entry name" value="AB_hydrolase_1"/>
</dbReference>
<dbReference type="InterPro" id="IPR029058">
    <property type="entry name" value="AB_hydrolase_fold"/>
</dbReference>
<dbReference type="PANTHER" id="PTHR43433:SF5">
    <property type="entry name" value="AB HYDROLASE-1 DOMAIN-CONTAINING PROTEIN"/>
    <property type="match status" value="1"/>
</dbReference>
<dbReference type="PANTHER" id="PTHR43433">
    <property type="entry name" value="HYDROLASE, ALPHA/BETA FOLD FAMILY PROTEIN"/>
    <property type="match status" value="1"/>
</dbReference>
<dbReference type="Pfam" id="PF00561">
    <property type="entry name" value="Abhydrolase_1"/>
    <property type="match status" value="1"/>
</dbReference>
<dbReference type="SUPFAM" id="SSF53474">
    <property type="entry name" value="alpha/beta-Hydrolases"/>
    <property type="match status" value="1"/>
</dbReference>
<sequence length="271" mass="30651">MTINNGTLQVPGANIHYQVRGSGPIILLVHGGGGDADKFHHVANHLANWYTVVTYDRRGHSRSNLANQIEGYRVETHSDDAHRLLAKITNKPAYVFGSSSGAVIGLDLCIRHPEQVHVMIPHEPILLQLLHGNELKQAEQFMEDLKKNHRSEVIKLMSRLETDEQSKAVLTKRLLGNSTYFTEYEIQGILSYTLDFEALKTVFTSSPMKILPAGGSASRELFPYRCANALAEQLETEWVEFPGNHTGYTMYHKEFSERLHDMLEKEKKHTC</sequence>
<gene>
    <name type="primary">yraK</name>
    <name type="ordered locus">BSU26910</name>
</gene>
<reference key="1">
    <citation type="journal article" date="1997" name="Microbiology">
        <title>A 23911 bp region of the Bacillus subtilis genome comprising genes located upstream and downstream of the lev operon.</title>
        <authorList>
            <person name="Parro V."/>
            <person name="San Roman M."/>
            <person name="Galindo I."/>
            <person name="Purnelle B."/>
            <person name="Bolotin A."/>
            <person name="Sorokin A."/>
            <person name="Mellado R.P."/>
        </authorList>
    </citation>
    <scope>NUCLEOTIDE SEQUENCE [GENOMIC DNA]</scope>
    <source>
        <strain>168</strain>
    </source>
</reference>
<reference key="2">
    <citation type="journal article" date="1997" name="Microbiology">
        <title>Sequence of the Bacillus subtilis genome region in the vicinity of the lev operon reveals two new extracytoplasmic function RNA polymerase sigma factors SigV and SigZ.</title>
        <authorList>
            <person name="Sorokin A."/>
            <person name="Bolotin A."/>
            <person name="Purnelle B."/>
            <person name="Hilbert H."/>
            <person name="Lauber J."/>
            <person name="Duesterhoeft A."/>
            <person name="Ehrlich S.D."/>
        </authorList>
    </citation>
    <scope>NUCLEOTIDE SEQUENCE [GENOMIC DNA]</scope>
    <source>
        <strain>168</strain>
    </source>
</reference>
<reference key="3">
    <citation type="journal article" date="1997" name="Nature">
        <title>The complete genome sequence of the Gram-positive bacterium Bacillus subtilis.</title>
        <authorList>
            <person name="Kunst F."/>
            <person name="Ogasawara N."/>
            <person name="Moszer I."/>
            <person name="Albertini A.M."/>
            <person name="Alloni G."/>
            <person name="Azevedo V."/>
            <person name="Bertero M.G."/>
            <person name="Bessieres P."/>
            <person name="Bolotin A."/>
            <person name="Borchert S."/>
            <person name="Borriss R."/>
            <person name="Boursier L."/>
            <person name="Brans A."/>
            <person name="Braun M."/>
            <person name="Brignell S.C."/>
            <person name="Bron S."/>
            <person name="Brouillet S."/>
            <person name="Bruschi C.V."/>
            <person name="Caldwell B."/>
            <person name="Capuano V."/>
            <person name="Carter N.M."/>
            <person name="Choi S.-K."/>
            <person name="Codani J.-J."/>
            <person name="Connerton I.F."/>
            <person name="Cummings N.J."/>
            <person name="Daniel R.A."/>
            <person name="Denizot F."/>
            <person name="Devine K.M."/>
            <person name="Duesterhoeft A."/>
            <person name="Ehrlich S.D."/>
            <person name="Emmerson P.T."/>
            <person name="Entian K.-D."/>
            <person name="Errington J."/>
            <person name="Fabret C."/>
            <person name="Ferrari E."/>
            <person name="Foulger D."/>
            <person name="Fritz C."/>
            <person name="Fujita M."/>
            <person name="Fujita Y."/>
            <person name="Fuma S."/>
            <person name="Galizzi A."/>
            <person name="Galleron N."/>
            <person name="Ghim S.-Y."/>
            <person name="Glaser P."/>
            <person name="Goffeau A."/>
            <person name="Golightly E.J."/>
            <person name="Grandi G."/>
            <person name="Guiseppi G."/>
            <person name="Guy B.J."/>
            <person name="Haga K."/>
            <person name="Haiech J."/>
            <person name="Harwood C.R."/>
            <person name="Henaut A."/>
            <person name="Hilbert H."/>
            <person name="Holsappel S."/>
            <person name="Hosono S."/>
            <person name="Hullo M.-F."/>
            <person name="Itaya M."/>
            <person name="Jones L.-M."/>
            <person name="Joris B."/>
            <person name="Karamata D."/>
            <person name="Kasahara Y."/>
            <person name="Klaerr-Blanchard M."/>
            <person name="Klein C."/>
            <person name="Kobayashi Y."/>
            <person name="Koetter P."/>
            <person name="Koningstein G."/>
            <person name="Krogh S."/>
            <person name="Kumano M."/>
            <person name="Kurita K."/>
            <person name="Lapidus A."/>
            <person name="Lardinois S."/>
            <person name="Lauber J."/>
            <person name="Lazarevic V."/>
            <person name="Lee S.-M."/>
            <person name="Levine A."/>
            <person name="Liu H."/>
            <person name="Masuda S."/>
            <person name="Mauel C."/>
            <person name="Medigue C."/>
            <person name="Medina N."/>
            <person name="Mellado R.P."/>
            <person name="Mizuno M."/>
            <person name="Moestl D."/>
            <person name="Nakai S."/>
            <person name="Noback M."/>
            <person name="Noone D."/>
            <person name="O'Reilly M."/>
            <person name="Ogawa K."/>
            <person name="Ogiwara A."/>
            <person name="Oudega B."/>
            <person name="Park S.-H."/>
            <person name="Parro V."/>
            <person name="Pohl T.M."/>
            <person name="Portetelle D."/>
            <person name="Porwollik S."/>
            <person name="Prescott A.M."/>
            <person name="Presecan E."/>
            <person name="Pujic P."/>
            <person name="Purnelle B."/>
            <person name="Rapoport G."/>
            <person name="Rey M."/>
            <person name="Reynolds S."/>
            <person name="Rieger M."/>
            <person name="Rivolta C."/>
            <person name="Rocha E."/>
            <person name="Roche B."/>
            <person name="Rose M."/>
            <person name="Sadaie Y."/>
            <person name="Sato T."/>
            <person name="Scanlan E."/>
            <person name="Schleich S."/>
            <person name="Schroeter R."/>
            <person name="Scoffone F."/>
            <person name="Sekiguchi J."/>
            <person name="Sekowska A."/>
            <person name="Seror S.J."/>
            <person name="Serror P."/>
            <person name="Shin B.-S."/>
            <person name="Soldo B."/>
            <person name="Sorokin A."/>
            <person name="Tacconi E."/>
            <person name="Takagi T."/>
            <person name="Takahashi H."/>
            <person name="Takemaru K."/>
            <person name="Takeuchi M."/>
            <person name="Tamakoshi A."/>
            <person name="Tanaka T."/>
            <person name="Terpstra P."/>
            <person name="Tognoni A."/>
            <person name="Tosato V."/>
            <person name="Uchiyama S."/>
            <person name="Vandenbol M."/>
            <person name="Vannier F."/>
            <person name="Vassarotti A."/>
            <person name="Viari A."/>
            <person name="Wambutt R."/>
            <person name="Wedler E."/>
            <person name="Wedler H."/>
            <person name="Weitzenegger T."/>
            <person name="Winters P."/>
            <person name="Wipat A."/>
            <person name="Yamamoto H."/>
            <person name="Yamane K."/>
            <person name="Yasumoto K."/>
            <person name="Yata K."/>
            <person name="Yoshida K."/>
            <person name="Yoshikawa H.-F."/>
            <person name="Zumstein E."/>
            <person name="Yoshikawa H."/>
            <person name="Danchin A."/>
        </authorList>
    </citation>
    <scope>NUCLEOTIDE SEQUENCE [LARGE SCALE GENOMIC DNA]</scope>
    <source>
        <strain>168</strain>
    </source>
</reference>
<reference key="4">
    <citation type="journal article" date="2009" name="Microbiology">
        <title>From a consortium sequence to a unified sequence: the Bacillus subtilis 168 reference genome a decade later.</title>
        <authorList>
            <person name="Barbe V."/>
            <person name="Cruveiller S."/>
            <person name="Kunst F."/>
            <person name="Lenoble P."/>
            <person name="Meurice G."/>
            <person name="Sekowska A."/>
            <person name="Vallenet D."/>
            <person name="Wang T."/>
            <person name="Moszer I."/>
            <person name="Medigue C."/>
            <person name="Danchin A."/>
        </authorList>
    </citation>
    <scope>SEQUENCE REVISION TO C-TERMINUS</scope>
</reference>